<comment type="function">
    <text evidence="7 9">Associated with the mammalian reproductive process. Plays an important role in the formation of the seminal coagulum through the cross-linking of specific proteins present in the seminal plasma. Transglutaminase is also required to stabilize the copulatory plug.</text>
</comment>
<comment type="catalytic activity">
    <reaction evidence="3 6 7 9">
        <text>L-glutaminyl-[protein] + L-lysyl-[protein] = [protein]-L-lysyl-N(6)-5-L-glutamyl-[protein] + NH4(+)</text>
        <dbReference type="Rhea" id="RHEA:54816"/>
        <dbReference type="Rhea" id="RHEA-COMP:9752"/>
        <dbReference type="Rhea" id="RHEA-COMP:10207"/>
        <dbReference type="Rhea" id="RHEA-COMP:14005"/>
        <dbReference type="ChEBI" id="CHEBI:28938"/>
        <dbReference type="ChEBI" id="CHEBI:29969"/>
        <dbReference type="ChEBI" id="CHEBI:30011"/>
        <dbReference type="ChEBI" id="CHEBI:138370"/>
        <dbReference type="EC" id="2.3.2.13"/>
    </reaction>
</comment>
<comment type="cofactor">
    <cofactor evidence="9">
        <name>Ca(2+)</name>
        <dbReference type="ChEBI" id="CHEBI:29108"/>
    </cofactor>
    <text evidence="9">Binds 1 Ca(2+) ion per subunit.</text>
</comment>
<comment type="subunit">
    <text evidence="8">Homodimer.</text>
</comment>
<comment type="subcellular location">
    <subcellularLocation>
        <location evidence="6 9">Secreted</location>
    </subcellularLocation>
    <subcellularLocation>
        <location evidence="10">Cell membrane</location>
        <topology evidence="10">Lipid-anchor</topology>
        <topology evidence="10">GPI-anchor</topology>
    </subcellularLocation>
</comment>
<comment type="tissue specificity">
    <text evidence="5 8">Expressed in the coagulating gland, the dorsal part of the prostate and in semen (at protein level). Expressed at low levels in the lateral prostate and seminal vesicle. Not expressed in the epididymis, kidney, liver, serum, sperm plug, testes and ventral prostate.</text>
</comment>
<comment type="induction">
    <text evidence="5 8">Androgen dependent, as shown by the decrease in the level of the protein following castration.</text>
</comment>
<comment type="PTM">
    <text>The N-terminus is blocked.</text>
</comment>
<comment type="PTM">
    <text>Probably linked to the cell membrane via a lipid-anchor, possibly a GPI-anchor.</text>
</comment>
<comment type="PTM">
    <text evidence="6 9">N-glycosylated on 2 Asn residues by a high mannose oligosaccharide consisting of five mannose residues and a fucosylated biantennary complex glycan.</text>
</comment>
<comment type="similarity">
    <text evidence="10">Belongs to the transglutaminase superfamily. Transglutaminase family.</text>
</comment>
<evidence type="ECO:0000250" key="1"/>
<evidence type="ECO:0000255" key="2"/>
<evidence type="ECO:0000255" key="3">
    <source>
        <dbReference type="PROSITE-ProRule" id="PRU10024"/>
    </source>
</evidence>
<evidence type="ECO:0000256" key="4">
    <source>
        <dbReference type="SAM" id="MobiDB-lite"/>
    </source>
</evidence>
<evidence type="ECO:0000269" key="5">
    <source>
    </source>
</evidence>
<evidence type="ECO:0000269" key="6">
    <source>
    </source>
</evidence>
<evidence type="ECO:0000269" key="7">
    <source>
    </source>
</evidence>
<evidence type="ECO:0000269" key="8">
    <source>
    </source>
</evidence>
<evidence type="ECO:0000269" key="9">
    <source>
    </source>
</evidence>
<evidence type="ECO:0000305" key="10"/>
<keyword id="KW-0012">Acyltransferase</keyword>
<keyword id="KW-0106">Calcium</keyword>
<keyword id="KW-1003">Cell membrane</keyword>
<keyword id="KW-0188">Copulatory plug</keyword>
<keyword id="KW-0903">Direct protein sequencing</keyword>
<keyword id="KW-0325">Glycoprotein</keyword>
<keyword id="KW-0336">GPI-anchor</keyword>
<keyword id="KW-0449">Lipoprotein</keyword>
<keyword id="KW-0472">Membrane</keyword>
<keyword id="KW-0479">Metal-binding</keyword>
<keyword id="KW-1185">Reference proteome</keyword>
<keyword id="KW-0964">Secreted</keyword>
<keyword id="KW-0808">Transferase</keyword>
<gene>
    <name type="primary">Tgm4</name>
    <name type="synonym">Dp1</name>
</gene>
<feature type="chain" id="PRO_0000213712" description="Protein-glutamine gamma-glutamyltransferase 4">
    <location>
        <begin position="1"/>
        <end position="667"/>
    </location>
</feature>
<feature type="region of interest" description="Disordered" evidence="4">
    <location>
        <begin position="430"/>
        <end position="449"/>
    </location>
</feature>
<feature type="active site" evidence="3">
    <location>
        <position position="256"/>
    </location>
</feature>
<feature type="active site" evidence="3">
    <location>
        <position position="315"/>
    </location>
</feature>
<feature type="active site" evidence="3">
    <location>
        <position position="338"/>
    </location>
</feature>
<feature type="binding site" evidence="1">
    <location>
        <position position="378"/>
    </location>
    <ligand>
        <name>Ca(2+)</name>
        <dbReference type="ChEBI" id="CHEBI:29108"/>
    </ligand>
</feature>
<feature type="binding site" evidence="1">
    <location>
        <position position="380"/>
    </location>
    <ligand>
        <name>Ca(2+)</name>
        <dbReference type="ChEBI" id="CHEBI:29108"/>
    </ligand>
</feature>
<feature type="binding site" evidence="1">
    <location>
        <position position="430"/>
    </location>
    <ligand>
        <name>Ca(2+)</name>
        <dbReference type="ChEBI" id="CHEBI:29108"/>
    </ligand>
</feature>
<feature type="binding site" evidence="1">
    <location>
        <position position="435"/>
    </location>
    <ligand>
        <name>Ca(2+)</name>
        <dbReference type="ChEBI" id="CHEBI:29108"/>
    </ligand>
</feature>
<feature type="glycosylation site" description="N-linked (GlcNAc...) asparagine" evidence="2">
    <location>
        <position position="151"/>
    </location>
</feature>
<feature type="glycosylation site" description="N-linked (GlcNAc...) asparagine" evidence="2">
    <location>
        <position position="220"/>
    </location>
</feature>
<feature type="glycosylation site" description="N-linked (GlcNAc...) asparagine" evidence="2">
    <location>
        <position position="227"/>
    </location>
</feature>
<feature type="glycosylation site" description="N-linked (GlcNAc...) asparagine" evidence="9">
    <location>
        <position position="408"/>
    </location>
</feature>
<feature type="glycosylation site" description="N-linked (GlcNAc...) asparagine" evidence="2">
    <location>
        <position position="472"/>
    </location>
</feature>
<feature type="glycosylation site" description="N-linked (GlcNAc...) asparagine" evidence="9">
    <location>
        <position position="488"/>
    </location>
</feature>
<feature type="sequence conflict" description="In Ref. 1; AAA42287." evidence="10" ref="1">
    <original>D</original>
    <variation>N</variation>
    <location>
        <position position="106"/>
    </location>
</feature>
<feature type="sequence conflict" description="In Ref. 1; AAA42287 and 4; AAA41092." evidence="10" ref="1 4">
    <original>F</original>
    <variation>L</variation>
    <location>
        <position position="128"/>
    </location>
</feature>
<feature type="sequence conflict" description="In Ref. 1; AAA42287 and 4; AAA41092." evidence="10" ref="1 4">
    <original>QFEKYILNCCFRLLTHLEPKEMQS</original>
    <variation>RLRSTLELLLPIVDPFGAQGNAE</variation>
    <location>
        <begin position="173"/>
        <end position="196"/>
    </location>
</feature>
<feature type="sequence conflict" description="In Ref. 4; AAA41092/AA sequence." evidence="10" ref="4">
    <original>F</original>
    <variation>FGVLTTALRAVGIPARSVTNF</variation>
    <location>
        <position position="280"/>
    </location>
</feature>
<feature type="sequence conflict" description="In Ref. 2; AAH66665." evidence="10" ref="2">
    <original>M</original>
    <variation>V</variation>
    <location>
        <position position="316"/>
    </location>
</feature>
<feature type="sequence conflict" description="In Ref. 1; AAA42287 and 4; AAA41092." evidence="10" ref="1 4">
    <original>I</original>
    <variation>F</variation>
    <location>
        <position position="366"/>
    </location>
</feature>
<feature type="sequence conflict" description="In Ref. 1; AAA42287 and 4; AAA41092." evidence="10" ref="1 4">
    <original>KNVLIAVET</original>
    <variation>RRMSHRCGDC</variation>
    <location>
        <begin position="394"/>
        <end position="402"/>
    </location>
</feature>
<feature type="sequence conflict" description="In Ref. 1; AAA42287 and 4; AAA41092." evidence="10" ref="1 4">
    <original>G</original>
    <variation>GN</variation>
    <location>
        <position position="641"/>
    </location>
</feature>
<organism>
    <name type="scientific">Rattus norvegicus</name>
    <name type="common">Rat</name>
    <dbReference type="NCBI Taxonomy" id="10116"/>
    <lineage>
        <taxon>Eukaryota</taxon>
        <taxon>Metazoa</taxon>
        <taxon>Chordata</taxon>
        <taxon>Craniata</taxon>
        <taxon>Vertebrata</taxon>
        <taxon>Euteleostomi</taxon>
        <taxon>Mammalia</taxon>
        <taxon>Eutheria</taxon>
        <taxon>Euarchontoglires</taxon>
        <taxon>Glires</taxon>
        <taxon>Rodentia</taxon>
        <taxon>Myomorpha</taxon>
        <taxon>Muroidea</taxon>
        <taxon>Muridae</taxon>
        <taxon>Murinae</taxon>
        <taxon>Rattus</taxon>
    </lineage>
</organism>
<accession>Q99041</accession>
<accession>Q6NYB5</accession>
<sequence length="667" mass="75587">MDSRNMLVVYSVNLEKKLNAAAHHTIEYQTQKLVLRRGQIFSLKVMLNRPLQSHDELKLIFNTGHNMPFYTVELDPMTSYRSKGWQVKIAKQSGVEVVLNVISAADAVVGRYTMNVNEFDAGVFFLLFNPWCSDDSVFMASEEDRAEYVLNDTGYMYMGFAKQIKEKPWTFGQFEKYILNCCFRLLTHLEPKEMQSPVLVSRAICTMMCAANNFGVLVGNWTGDYSNGTAPYVWASSVPILQQHYITRMPVRFGQCWVFSGVLTTALRAVGIPARSVTNFESAHDTEKNLRVDIYLDESGKTIPHLTKDSVWNFHMWTDAWMKRQDLPQGHDGWQVLDSTPQEISEGQFRIGPSPVSAIRQGLVQIMYDTTFVFTEVNGDKYIWLVKQNQEREKNVLIAVETASIGKNISTKMVGENRRQDITLHYKFPEGSPEERKAMEKASGKRPDDKLNSRTLHISVLQNSVELGHPINLTIVLKRKTATPQNVNISCSLDLQTYTGNKKTNLGVIQKTVQIQGQESEVSLSMDSSFYIYKLGMVDDEMVIKGFIIAEIVDSGERVATDTTLCFLYSAFSVEMPSTSKVNQPLTITCNFKNTLPIPLTNIKFSVESLGLNNMKSWEQETVPPGKTINFQIECTPVKTGPRKFIVKFISRQVKEVHAEKVVLITK</sequence>
<reference key="1">
    <citation type="journal article" date="1992" name="J. Biol. Chem.">
        <title>Molecular cloning of rat prostate transglutaminase complementary DNA. The major androgen-regulated protein DP1 of rat dorsal prostate and coagulating gland.</title>
        <authorList>
            <person name="Ho K.-C."/>
            <person name="Quarmby V.E."/>
            <person name="French F.S."/>
            <person name="Wilson E.M."/>
        </authorList>
    </citation>
    <scope>NUCLEOTIDE SEQUENCE [MRNA]</scope>
    <scope>PARTIAL PROTEIN SEQUENCE</scope>
    <scope>TISSUE SPECIFICITY</scope>
    <scope>INDUCTION BY ANDROGEN</scope>
    <source>
        <strain>Sprague-Dawley</strain>
        <tissue>Prostate</tissue>
    </source>
</reference>
<reference key="2">
    <citation type="journal article" date="2004" name="Genome Res.">
        <title>The status, quality, and expansion of the NIH full-length cDNA project: the Mammalian Gene Collection (MGC).</title>
        <authorList>
            <consortium name="The MGC Project Team"/>
        </authorList>
    </citation>
    <scope>NUCLEOTIDE SEQUENCE [LARGE SCALE MRNA]</scope>
</reference>
<reference key="3">
    <citation type="journal article" date="1996" name="J. Biol. Chem.">
        <title>Transglutaminase from rat coagulating gland secretion. Post-translational modifications and activation by phosphatidic acids.</title>
        <authorList>
            <person name="Esposito C."/>
            <person name="Pucci P."/>
            <person name="Amoresano A."/>
            <person name="Marino G."/>
            <person name="Cozzolino A."/>
            <person name="Porta R."/>
        </authorList>
    </citation>
    <scope>PROTEIN SEQUENCE OF 59-75; 276-288; 313-344 AND 503-511</scope>
    <scope>FUNCTION</scope>
    <scope>CATALYTIC ACTIVITY</scope>
    <scope>COFACTOR</scope>
    <scope>SUBCELLULAR LOCATION</scope>
    <scope>GLYCOSYLATION AT ASN-408 AND ASN-488</scope>
    <scope>GPI-ANCHOR</scope>
</reference>
<reference key="4">
    <citation type="journal article" date="1987" name="Prog. Clin. Biol. Res.">
        <title>Androgen regulated prostate genes: structural analysis and regulation.</title>
        <authorList>
            <person name="Ho K.-C."/>
            <person name="Wilson E.M."/>
            <person name="French F.S."/>
        </authorList>
    </citation>
    <scope>NUCLEOTIDE SEQUENCE [MRNA] OF 100-667</scope>
    <scope>PARTIAL PROTEIN SEQUENCE</scope>
</reference>
<reference key="5">
    <citation type="journal article" date="1980" name="J. Biol. Chem.">
        <title>Biochemical homology between rat dorsal prostate and coagulating gland. Purification of a major androgen-induced protein.</title>
        <authorList>
            <person name="Wilson E.M."/>
            <person name="French F.S."/>
        </authorList>
    </citation>
    <scope>TISSUE SPECIFICITY</scope>
    <scope>SUBUNIT</scope>
    <scope>INDUCTION BY ANDROGEN</scope>
</reference>
<reference key="6">
    <citation type="journal article" date="1984" name="Science">
        <title>Transglutaminase-mediated modifications of the rat sperm surface in vitro.</title>
        <authorList>
            <person name="Paonessa G."/>
            <person name="Metafora S."/>
            <person name="Tajana G."/>
            <person name="Abrescia P."/>
            <person name="De Santis A."/>
            <person name="Gentile V."/>
            <person name="Porta R."/>
        </authorList>
    </citation>
    <scope>FUNCTION</scope>
    <scope>CATALYTIC ACTIVITY</scope>
</reference>
<reference key="7">
    <citation type="journal article" date="1991" name="Biochim. Biophys. Acta">
        <title>Purification and molecular characterization of a secretory transglutaminase from coagulating gland of the rat.</title>
        <authorList>
            <person name="Seitz J."/>
            <person name="Keppler C."/>
            <person name="Huentemann S."/>
            <person name="Rausch U."/>
            <person name="Aumueller G."/>
        </authorList>
    </citation>
    <scope>CATALYTIC ACTIVITY</scope>
    <scope>SUBCELLULAR LOCATION</scope>
    <scope>GLYCOSYLATION</scope>
    <scope>GPI-ANCHOR</scope>
</reference>
<dbReference type="EC" id="2.3.2.13"/>
<dbReference type="EMBL" id="M90310">
    <property type="protein sequence ID" value="AAA42287.1"/>
    <property type="molecule type" value="mRNA"/>
</dbReference>
<dbReference type="EMBL" id="BC066665">
    <property type="protein sequence ID" value="AAH66665.1"/>
    <property type="molecule type" value="mRNA"/>
</dbReference>
<dbReference type="EMBL" id="M32725">
    <property type="protein sequence ID" value="AAA41092.1"/>
    <property type="molecule type" value="mRNA"/>
</dbReference>
<dbReference type="PIR" id="A42803">
    <property type="entry name" value="A42803"/>
</dbReference>
<dbReference type="RefSeq" id="NP_073204.2">
    <property type="nucleotide sequence ID" value="NM_022713.2"/>
</dbReference>
<dbReference type="SMR" id="Q99041"/>
<dbReference type="FunCoup" id="Q99041">
    <property type="interactions" value="34"/>
</dbReference>
<dbReference type="STRING" id="10116.ENSRNOP00000052677"/>
<dbReference type="GlyCosmos" id="Q99041">
    <property type="glycosylation" value="6 sites, No reported glycans"/>
</dbReference>
<dbReference type="GlyGen" id="Q99041">
    <property type="glycosylation" value="6 sites"/>
</dbReference>
<dbReference type="iPTMnet" id="Q99041"/>
<dbReference type="PhosphoSitePlus" id="Q99041"/>
<dbReference type="PaxDb" id="10116-ENSRNOP00000052677"/>
<dbReference type="GeneID" id="64679"/>
<dbReference type="KEGG" id="rno:64679"/>
<dbReference type="UCSC" id="RGD:620785">
    <property type="organism name" value="rat"/>
</dbReference>
<dbReference type="AGR" id="RGD:620785"/>
<dbReference type="CTD" id="7047"/>
<dbReference type="RGD" id="620785">
    <property type="gene designation" value="Tgm4"/>
</dbReference>
<dbReference type="eggNOG" id="ENOG502QQ46">
    <property type="taxonomic scope" value="Eukaryota"/>
</dbReference>
<dbReference type="InParanoid" id="Q99041"/>
<dbReference type="OrthoDB" id="65173at9989"/>
<dbReference type="PhylomeDB" id="Q99041"/>
<dbReference type="TreeFam" id="TF324278"/>
<dbReference type="PRO" id="PR:Q99041"/>
<dbReference type="Proteomes" id="UP000002494">
    <property type="component" value="Unplaced"/>
</dbReference>
<dbReference type="GO" id="GO:0062023">
    <property type="term" value="C:collagen-containing extracellular matrix"/>
    <property type="evidence" value="ECO:0000318"/>
    <property type="project" value="GO_Central"/>
</dbReference>
<dbReference type="GO" id="GO:0005737">
    <property type="term" value="C:cytoplasm"/>
    <property type="evidence" value="ECO:0000266"/>
    <property type="project" value="RGD"/>
</dbReference>
<dbReference type="GO" id="GO:0005576">
    <property type="term" value="C:extracellular region"/>
    <property type="evidence" value="ECO:0007669"/>
    <property type="project" value="UniProtKB-SubCell"/>
</dbReference>
<dbReference type="GO" id="GO:0005794">
    <property type="term" value="C:Golgi apparatus"/>
    <property type="evidence" value="ECO:0000266"/>
    <property type="project" value="RGD"/>
</dbReference>
<dbReference type="GO" id="GO:0005886">
    <property type="term" value="C:plasma membrane"/>
    <property type="evidence" value="ECO:0007669"/>
    <property type="project" value="UniProtKB-SubCell"/>
</dbReference>
<dbReference type="GO" id="GO:0098552">
    <property type="term" value="C:side of membrane"/>
    <property type="evidence" value="ECO:0007669"/>
    <property type="project" value="UniProtKB-KW"/>
</dbReference>
<dbReference type="GO" id="GO:0046872">
    <property type="term" value="F:metal ion binding"/>
    <property type="evidence" value="ECO:0007669"/>
    <property type="project" value="UniProtKB-KW"/>
</dbReference>
<dbReference type="GO" id="GO:0003810">
    <property type="term" value="F:protein-glutamine gamma-glutamyltransferase activity"/>
    <property type="evidence" value="ECO:0000318"/>
    <property type="project" value="GO_Central"/>
</dbReference>
<dbReference type="GO" id="GO:0042628">
    <property type="term" value="P:mating plug formation"/>
    <property type="evidence" value="ECO:0000266"/>
    <property type="project" value="RGD"/>
</dbReference>
<dbReference type="FunFam" id="3.90.260.10:FF:000001">
    <property type="entry name" value="Protein-glutamine gamma-glutamyltransferase 2"/>
    <property type="match status" value="1"/>
</dbReference>
<dbReference type="FunFam" id="2.60.40.10:FF:001406">
    <property type="entry name" value="Protein-glutamine gamma-glutamyltransferase 4"/>
    <property type="match status" value="1"/>
</dbReference>
<dbReference type="FunFam" id="2.60.40.10:FF:001482">
    <property type="entry name" value="Protein-glutamine gamma-glutamyltransferase 4"/>
    <property type="match status" value="1"/>
</dbReference>
<dbReference type="Gene3D" id="2.60.40.10">
    <property type="entry name" value="Immunoglobulins"/>
    <property type="match status" value="3"/>
</dbReference>
<dbReference type="Gene3D" id="3.90.260.10">
    <property type="entry name" value="Transglutaminase-like"/>
    <property type="match status" value="1"/>
</dbReference>
<dbReference type="InterPro" id="IPR013783">
    <property type="entry name" value="Ig-like_fold"/>
</dbReference>
<dbReference type="InterPro" id="IPR014756">
    <property type="entry name" value="Ig_E-set"/>
</dbReference>
<dbReference type="InterPro" id="IPR038765">
    <property type="entry name" value="Papain-like_cys_pep_sf"/>
</dbReference>
<dbReference type="InterPro" id="IPR050779">
    <property type="entry name" value="Transglutaminase"/>
</dbReference>
<dbReference type="InterPro" id="IPR002931">
    <property type="entry name" value="Transglutaminase-like"/>
</dbReference>
<dbReference type="InterPro" id="IPR036985">
    <property type="entry name" value="Transglutaminase-like_sf"/>
</dbReference>
<dbReference type="InterPro" id="IPR023608">
    <property type="entry name" value="Transglutaminase_animal"/>
</dbReference>
<dbReference type="InterPro" id="IPR013808">
    <property type="entry name" value="Transglutaminase_AS"/>
</dbReference>
<dbReference type="InterPro" id="IPR008958">
    <property type="entry name" value="Transglutaminase_C"/>
</dbReference>
<dbReference type="InterPro" id="IPR036238">
    <property type="entry name" value="Transglutaminase_C_sf"/>
</dbReference>
<dbReference type="InterPro" id="IPR001102">
    <property type="entry name" value="Transglutaminase_N"/>
</dbReference>
<dbReference type="PANTHER" id="PTHR11590">
    <property type="entry name" value="PROTEIN-GLUTAMINE GAMMA-GLUTAMYLTRANSFERASE"/>
    <property type="match status" value="1"/>
</dbReference>
<dbReference type="PANTHER" id="PTHR11590:SF70">
    <property type="entry name" value="PROTEIN-GLUTAMINE GAMMA-GLUTAMYLTRANSFERASE 4"/>
    <property type="match status" value="1"/>
</dbReference>
<dbReference type="Pfam" id="PF00927">
    <property type="entry name" value="Transglut_C"/>
    <property type="match status" value="1"/>
</dbReference>
<dbReference type="Pfam" id="PF01841">
    <property type="entry name" value="Transglut_core"/>
    <property type="match status" value="1"/>
</dbReference>
<dbReference type="Pfam" id="PF00868">
    <property type="entry name" value="Transglut_N"/>
    <property type="match status" value="1"/>
</dbReference>
<dbReference type="PIRSF" id="PIRSF000459">
    <property type="entry name" value="TGM_EBP42"/>
    <property type="match status" value="1"/>
</dbReference>
<dbReference type="SMART" id="SM00460">
    <property type="entry name" value="TGc"/>
    <property type="match status" value="1"/>
</dbReference>
<dbReference type="SUPFAM" id="SSF54001">
    <property type="entry name" value="Cysteine proteinases"/>
    <property type="match status" value="1"/>
</dbReference>
<dbReference type="SUPFAM" id="SSF81296">
    <property type="entry name" value="E set domains"/>
    <property type="match status" value="1"/>
</dbReference>
<dbReference type="SUPFAM" id="SSF49309">
    <property type="entry name" value="Transglutaminase, two C-terminal domains"/>
    <property type="match status" value="2"/>
</dbReference>
<dbReference type="PROSITE" id="PS00547">
    <property type="entry name" value="TRANSGLUTAMINASES"/>
    <property type="match status" value="1"/>
</dbReference>
<protein>
    <recommendedName>
        <fullName>Protein-glutamine gamma-glutamyltransferase 4</fullName>
        <ecNumber>2.3.2.13</ecNumber>
    </recommendedName>
    <alternativeName>
        <fullName>Dorsal prostate transglutaminase</fullName>
    </alternativeName>
    <alternativeName>
        <fullName>Dorsal protein 1</fullName>
        <shortName>DP1</shortName>
    </alternativeName>
    <alternativeName>
        <fullName>Transglutaminase-4</fullName>
        <shortName>TGase-4</shortName>
    </alternativeName>
</protein>
<name>TGM4_RAT</name>
<proteinExistence type="evidence at protein level"/>